<proteinExistence type="inferred from homology"/>
<sequence length="465" mass="51241">MSFIRLHKDAAAMWLSRLLPAAIFILVGLFSIMVIRDYGRESAAARQTLLEKGNVLIRALESGTRVGMGMRMHHAQQQTLLEEMAGQPGVLWFAVTDAQGVIITHSNPGMVGKSLYSPSEMHQLNPGPQECWRRVDVAANGETVPALEIYRQFQPLFGMRGHGMRGHGMARSANDDEPAKQTIFIAFDASELAATQAREWRNTLIVLSALAAVLLATLLAFFWYQRYQRSHRELLDAMKRKEKLVAMGHLAAGVAHEIRNPLSSIKGLAKYFAERTPAGGESHELAQVMAKEADRLNRVVSELLELVKPAHLTLQAVNLNDIITHSLNLVSQDAQSREIQLRFTANETLKRIQADPDRLTQVLLNLYLNAIHAIGRQGTITVEAKESGTDRVIITVTDSGKGIAPDQLEAIFTPYFTTKADGTGLGLAVVQNIIEQHGGAIKVKSIEGKGAVFTIWLPVIARQQD</sequence>
<reference key="1">
    <citation type="journal article" date="2001" name="Nature">
        <title>Complete genome sequence of a multiple drug resistant Salmonella enterica serovar Typhi CT18.</title>
        <authorList>
            <person name="Parkhill J."/>
            <person name="Dougan G."/>
            <person name="James K.D."/>
            <person name="Thomson N.R."/>
            <person name="Pickard D."/>
            <person name="Wain J."/>
            <person name="Churcher C.M."/>
            <person name="Mungall K.L."/>
            <person name="Bentley S.D."/>
            <person name="Holden M.T.G."/>
            <person name="Sebaihia M."/>
            <person name="Baker S."/>
            <person name="Basham D."/>
            <person name="Brooks K."/>
            <person name="Chillingworth T."/>
            <person name="Connerton P."/>
            <person name="Cronin A."/>
            <person name="Davis P."/>
            <person name="Davies R.M."/>
            <person name="Dowd L."/>
            <person name="White N."/>
            <person name="Farrar J."/>
            <person name="Feltwell T."/>
            <person name="Hamlin N."/>
            <person name="Haque A."/>
            <person name="Hien T.T."/>
            <person name="Holroyd S."/>
            <person name="Jagels K."/>
            <person name="Krogh A."/>
            <person name="Larsen T.S."/>
            <person name="Leather S."/>
            <person name="Moule S."/>
            <person name="O'Gaora P."/>
            <person name="Parry C."/>
            <person name="Quail M.A."/>
            <person name="Rutherford K.M."/>
            <person name="Simmonds M."/>
            <person name="Skelton J."/>
            <person name="Stevens K."/>
            <person name="Whitehead S."/>
            <person name="Barrell B.G."/>
        </authorList>
    </citation>
    <scope>NUCLEOTIDE SEQUENCE [LARGE SCALE GENOMIC DNA]</scope>
    <source>
        <strain>CT18</strain>
    </source>
</reference>
<reference key="2">
    <citation type="journal article" date="2003" name="J. Bacteriol.">
        <title>Comparative genomics of Salmonella enterica serovar Typhi strains Ty2 and CT18.</title>
        <authorList>
            <person name="Deng W."/>
            <person name="Liou S.-R."/>
            <person name="Plunkett G. III"/>
            <person name="Mayhew G.F."/>
            <person name="Rose D.J."/>
            <person name="Burland V."/>
            <person name="Kodoyianni V."/>
            <person name="Schwartz D.C."/>
            <person name="Blattner F.R."/>
        </authorList>
    </citation>
    <scope>NUCLEOTIDE SEQUENCE [LARGE SCALE GENOMIC DNA]</scope>
    <source>
        <strain>ATCC 700931 / Ty2</strain>
    </source>
</reference>
<accession>Q8Z332</accession>
<protein>
    <recommendedName>
        <fullName evidence="1">Sensor histidine kinase ZraS</fullName>
        <ecNumber evidence="1">2.7.13.3</ecNumber>
    </recommendedName>
</protein>
<dbReference type="EC" id="2.7.13.3" evidence="1"/>
<dbReference type="EMBL" id="AL513382">
    <property type="protein sequence ID" value="CAD09471.1"/>
    <property type="molecule type" value="Genomic_DNA"/>
</dbReference>
<dbReference type="EMBL" id="AE014613">
    <property type="protein sequence ID" value="AAO70974.1"/>
    <property type="molecule type" value="Genomic_DNA"/>
</dbReference>
<dbReference type="RefSeq" id="NP_457901.1">
    <property type="nucleotide sequence ID" value="NC_003198.1"/>
</dbReference>
<dbReference type="RefSeq" id="WP_001772857.1">
    <property type="nucleotide sequence ID" value="NZ_WSUR01000043.1"/>
</dbReference>
<dbReference type="SMR" id="Q8Z332"/>
<dbReference type="STRING" id="220341.gene:17587572"/>
<dbReference type="KEGG" id="stt:t3458"/>
<dbReference type="KEGG" id="sty:STY3712"/>
<dbReference type="PATRIC" id="fig|220341.7.peg.3784"/>
<dbReference type="eggNOG" id="COG4191">
    <property type="taxonomic scope" value="Bacteria"/>
</dbReference>
<dbReference type="HOGENOM" id="CLU_000445_89_29_6"/>
<dbReference type="OMA" id="LAQFWFR"/>
<dbReference type="OrthoDB" id="1931120at2"/>
<dbReference type="BRENDA" id="2.7.13.3">
    <property type="organism ID" value="5557"/>
</dbReference>
<dbReference type="Proteomes" id="UP000000541">
    <property type="component" value="Chromosome"/>
</dbReference>
<dbReference type="Proteomes" id="UP000002670">
    <property type="component" value="Chromosome"/>
</dbReference>
<dbReference type="GO" id="GO:0005886">
    <property type="term" value="C:plasma membrane"/>
    <property type="evidence" value="ECO:0007669"/>
    <property type="project" value="UniProtKB-SubCell"/>
</dbReference>
<dbReference type="GO" id="GO:0005524">
    <property type="term" value="F:ATP binding"/>
    <property type="evidence" value="ECO:0007669"/>
    <property type="project" value="UniProtKB-KW"/>
</dbReference>
<dbReference type="GO" id="GO:0000155">
    <property type="term" value="F:phosphorelay sensor kinase activity"/>
    <property type="evidence" value="ECO:0007669"/>
    <property type="project" value="InterPro"/>
</dbReference>
<dbReference type="CDD" id="cd00082">
    <property type="entry name" value="HisKA"/>
    <property type="match status" value="1"/>
</dbReference>
<dbReference type="Gene3D" id="1.10.287.130">
    <property type="match status" value="1"/>
</dbReference>
<dbReference type="Gene3D" id="3.30.565.10">
    <property type="entry name" value="Histidine kinase-like ATPase, C-terminal domain"/>
    <property type="match status" value="1"/>
</dbReference>
<dbReference type="Gene3D" id="3.30.450.20">
    <property type="entry name" value="PAS domain"/>
    <property type="match status" value="1"/>
</dbReference>
<dbReference type="InterPro" id="IPR036890">
    <property type="entry name" value="HATPase_C_sf"/>
</dbReference>
<dbReference type="InterPro" id="IPR005467">
    <property type="entry name" value="His_kinase_dom"/>
</dbReference>
<dbReference type="InterPro" id="IPR003661">
    <property type="entry name" value="HisK_dim/P_dom"/>
</dbReference>
<dbReference type="InterPro" id="IPR036097">
    <property type="entry name" value="HisK_dim/P_sf"/>
</dbReference>
<dbReference type="InterPro" id="IPR029151">
    <property type="entry name" value="Sensor-like_sf"/>
</dbReference>
<dbReference type="InterPro" id="IPR004358">
    <property type="entry name" value="Sig_transdc_His_kin-like_C"/>
</dbReference>
<dbReference type="NCBIfam" id="NF007688">
    <property type="entry name" value="PRK10364.1"/>
    <property type="match status" value="1"/>
</dbReference>
<dbReference type="PANTHER" id="PTHR43065">
    <property type="entry name" value="SENSOR HISTIDINE KINASE"/>
    <property type="match status" value="1"/>
</dbReference>
<dbReference type="PANTHER" id="PTHR43065:SF54">
    <property type="entry name" value="SENSOR PROTEIN ZRAS"/>
    <property type="match status" value="1"/>
</dbReference>
<dbReference type="Pfam" id="PF02518">
    <property type="entry name" value="HATPase_c"/>
    <property type="match status" value="1"/>
</dbReference>
<dbReference type="Pfam" id="PF00512">
    <property type="entry name" value="HisKA"/>
    <property type="match status" value="1"/>
</dbReference>
<dbReference type="PRINTS" id="PR00344">
    <property type="entry name" value="BCTRLSENSOR"/>
</dbReference>
<dbReference type="SMART" id="SM00387">
    <property type="entry name" value="HATPase_c"/>
    <property type="match status" value="1"/>
</dbReference>
<dbReference type="SMART" id="SM00388">
    <property type="entry name" value="HisKA"/>
    <property type="match status" value="1"/>
</dbReference>
<dbReference type="SUPFAM" id="SSF55874">
    <property type="entry name" value="ATPase domain of HSP90 chaperone/DNA topoisomerase II/histidine kinase"/>
    <property type="match status" value="1"/>
</dbReference>
<dbReference type="SUPFAM" id="SSF47384">
    <property type="entry name" value="Homodimeric domain of signal transducing histidine kinase"/>
    <property type="match status" value="1"/>
</dbReference>
<dbReference type="SUPFAM" id="SSF103190">
    <property type="entry name" value="Sensory domain-like"/>
    <property type="match status" value="1"/>
</dbReference>
<dbReference type="PROSITE" id="PS50109">
    <property type="entry name" value="HIS_KIN"/>
    <property type="match status" value="1"/>
</dbReference>
<feature type="chain" id="PRO_0000074912" description="Sensor histidine kinase ZraS">
    <location>
        <begin position="1"/>
        <end position="465"/>
    </location>
</feature>
<feature type="topological domain" description="Cytoplasmic" evidence="4">
    <location>
        <begin position="1"/>
        <end position="14"/>
    </location>
</feature>
<feature type="transmembrane region" description="Helical" evidence="2">
    <location>
        <begin position="15"/>
        <end position="35"/>
    </location>
</feature>
<feature type="topological domain" description="Periplasmic" evidence="4">
    <location>
        <begin position="36"/>
        <end position="203"/>
    </location>
</feature>
<feature type="transmembrane region" description="Helical" evidence="2">
    <location>
        <begin position="204"/>
        <end position="224"/>
    </location>
</feature>
<feature type="topological domain" description="Cytoplasmic" evidence="4">
    <location>
        <begin position="225"/>
        <end position="465"/>
    </location>
</feature>
<feature type="domain" description="Histidine kinase" evidence="3">
    <location>
        <begin position="253"/>
        <end position="461"/>
    </location>
</feature>
<feature type="modified residue" description="Phosphohistidine; by autocatalysis" evidence="3">
    <location>
        <position position="256"/>
    </location>
</feature>
<comment type="function">
    <text evidence="1">Part of the Zra signaling pathway, an envelope stress response (ESR) system composed of the periplasmic accessory protein ZraP, the histidine kinase ZraS and the transcriptional regulator ZraR. The ZraPSR system contributes to antibiotic resistance and is important for membrane integrity in the presence of membrane-targeting biocides. ZraS is a member of the two-component regulatory system ZraS/ZraR. Functions as a membrane-associated sensor kinase that phosphorylates ZraR in response to high concentrations of Zn(2+) or Pb(2+) in the medium.</text>
</comment>
<comment type="catalytic activity">
    <reaction evidence="1">
        <text>ATP + protein L-histidine = ADP + protein N-phospho-L-histidine.</text>
        <dbReference type="EC" id="2.7.13.3"/>
    </reaction>
</comment>
<comment type="activity regulation">
    <text evidence="1">Activity of the ZraS/ZraR two-component system is repressed by the zinc-bound form of ZraP, which probably interacts with the periplasmic region of ZraS.</text>
</comment>
<comment type="subcellular location">
    <subcellularLocation>
        <location evidence="1">Cell inner membrane</location>
        <topology evidence="2">Multi-pass membrane protein</topology>
    </subcellularLocation>
</comment>
<comment type="PTM">
    <text evidence="1">Autophosphorylated.</text>
</comment>
<name>ZRAS_SALTI</name>
<keyword id="KW-0067">ATP-binding</keyword>
<keyword id="KW-0997">Cell inner membrane</keyword>
<keyword id="KW-1003">Cell membrane</keyword>
<keyword id="KW-0418">Kinase</keyword>
<keyword id="KW-0472">Membrane</keyword>
<keyword id="KW-0547">Nucleotide-binding</keyword>
<keyword id="KW-0597">Phosphoprotein</keyword>
<keyword id="KW-0346">Stress response</keyword>
<keyword id="KW-0808">Transferase</keyword>
<keyword id="KW-0812">Transmembrane</keyword>
<keyword id="KW-1133">Transmembrane helix</keyword>
<keyword id="KW-0902">Two-component regulatory system</keyword>
<keyword id="KW-0862">Zinc</keyword>
<gene>
    <name type="primary">zraS</name>
    <name type="synonym">hydH</name>
    <name type="ordered locus">STY3712</name>
    <name type="ordered locus">t3458</name>
</gene>
<organism>
    <name type="scientific">Salmonella typhi</name>
    <dbReference type="NCBI Taxonomy" id="90370"/>
    <lineage>
        <taxon>Bacteria</taxon>
        <taxon>Pseudomonadati</taxon>
        <taxon>Pseudomonadota</taxon>
        <taxon>Gammaproteobacteria</taxon>
        <taxon>Enterobacterales</taxon>
        <taxon>Enterobacteriaceae</taxon>
        <taxon>Salmonella</taxon>
    </lineage>
</organism>
<evidence type="ECO:0000250" key="1">
    <source>
        <dbReference type="UniProtKB" id="P14377"/>
    </source>
</evidence>
<evidence type="ECO:0000255" key="2"/>
<evidence type="ECO:0000255" key="3">
    <source>
        <dbReference type="PROSITE-ProRule" id="PRU00107"/>
    </source>
</evidence>
<evidence type="ECO:0000305" key="4"/>